<organism>
    <name type="scientific">Homo sapiens</name>
    <name type="common">Human</name>
    <dbReference type="NCBI Taxonomy" id="9606"/>
    <lineage>
        <taxon>Eukaryota</taxon>
        <taxon>Metazoa</taxon>
        <taxon>Chordata</taxon>
        <taxon>Craniata</taxon>
        <taxon>Vertebrata</taxon>
        <taxon>Euteleostomi</taxon>
        <taxon>Mammalia</taxon>
        <taxon>Eutheria</taxon>
        <taxon>Euarchontoglires</taxon>
        <taxon>Primates</taxon>
        <taxon>Haplorrhini</taxon>
        <taxon>Catarrhini</taxon>
        <taxon>Hominidae</taxon>
        <taxon>Homo</taxon>
    </lineage>
</organism>
<dbReference type="EC" id="3.1.1.111" evidence="5"/>
<dbReference type="EMBL" id="U37591">
    <property type="protein sequence ID" value="AAC99994.1"/>
    <property type="molecule type" value="mRNA"/>
</dbReference>
<dbReference type="EMBL" id="AF035268">
    <property type="protein sequence ID" value="AAC98921.1"/>
    <property type="molecule type" value="mRNA"/>
</dbReference>
<dbReference type="EMBL" id="AF035269">
    <property type="protein sequence ID" value="AAC98922.1"/>
    <property type="molecule type" value="mRNA"/>
</dbReference>
<dbReference type="EMBL" id="AK301880">
    <property type="protein sequence ID" value="BAG63314.1"/>
    <property type="molecule type" value="mRNA"/>
</dbReference>
<dbReference type="EMBL" id="AK313519">
    <property type="protein sequence ID" value="BAG36299.1"/>
    <property type="molecule type" value="mRNA"/>
</dbReference>
<dbReference type="EMBL" id="AK222705">
    <property type="protein sequence ID" value="BAD96425.1"/>
    <property type="molecule type" value="mRNA"/>
</dbReference>
<dbReference type="EMBL" id="AC073352">
    <property type="status" value="NOT_ANNOTATED_CDS"/>
    <property type="molecule type" value="Genomic_DNA"/>
</dbReference>
<dbReference type="EMBL" id="CH471052">
    <property type="protein sequence ID" value="EAW79557.1"/>
    <property type="molecule type" value="Genomic_DNA"/>
</dbReference>
<dbReference type="EMBL" id="BC047703">
    <property type="protein sequence ID" value="AAH47703.1"/>
    <property type="molecule type" value="mRNA"/>
</dbReference>
<dbReference type="CCDS" id="CCDS2991.1">
    <molecule id="Q53H76-1"/>
</dbReference>
<dbReference type="CCDS" id="CCDS56268.1">
    <molecule id="Q53H76-3"/>
</dbReference>
<dbReference type="CCDS" id="CCDS56269.1">
    <molecule id="Q53H76-4"/>
</dbReference>
<dbReference type="RefSeq" id="NP_001193889.1">
    <molecule id="Q53H76-3"/>
    <property type="nucleotide sequence ID" value="NM_001206960.2"/>
</dbReference>
<dbReference type="RefSeq" id="NP_001193890.1">
    <molecule id="Q53H76-4"/>
    <property type="nucleotide sequence ID" value="NM_001206961.2"/>
</dbReference>
<dbReference type="RefSeq" id="NP_056984.1">
    <molecule id="Q53H76-1"/>
    <property type="nucleotide sequence ID" value="NM_015900.4"/>
</dbReference>
<dbReference type="RefSeq" id="XP_016862061.1">
    <molecule id="Q53H76-4"/>
    <property type="nucleotide sequence ID" value="XM_017006572.2"/>
</dbReference>
<dbReference type="RefSeq" id="XP_054202750.1">
    <molecule id="Q53H76-4"/>
    <property type="nucleotide sequence ID" value="XM_054346775.1"/>
</dbReference>
<dbReference type="SMR" id="Q53H76"/>
<dbReference type="BioGRID" id="119500">
    <property type="interactions" value="16"/>
</dbReference>
<dbReference type="FunCoup" id="Q53H76">
    <property type="interactions" value="585"/>
</dbReference>
<dbReference type="IntAct" id="Q53H76">
    <property type="interactions" value="6"/>
</dbReference>
<dbReference type="STRING" id="9606.ENSP00000273371"/>
<dbReference type="ESTHER" id="human-PLA1A">
    <property type="family name" value="Phospholipase"/>
</dbReference>
<dbReference type="GlyCosmos" id="Q53H76">
    <property type="glycosylation" value="2 sites, No reported glycans"/>
</dbReference>
<dbReference type="GlyGen" id="Q53H76">
    <property type="glycosylation" value="4 sites, 1 O-linked glycan (1 site)"/>
</dbReference>
<dbReference type="iPTMnet" id="Q53H76"/>
<dbReference type="PhosphoSitePlus" id="Q53H76"/>
<dbReference type="BioMuta" id="PLA1A"/>
<dbReference type="DMDM" id="124015212"/>
<dbReference type="MassIVE" id="Q53H76"/>
<dbReference type="PaxDb" id="9606-ENSP00000273371"/>
<dbReference type="PeptideAtlas" id="Q53H76"/>
<dbReference type="ProteomicsDB" id="5421"/>
<dbReference type="ProteomicsDB" id="62497">
    <molecule id="Q53H76-1"/>
</dbReference>
<dbReference type="ProteomicsDB" id="62498">
    <molecule id="Q53H76-2"/>
</dbReference>
<dbReference type="ProteomicsDB" id="62499">
    <molecule id="Q53H76-3"/>
</dbReference>
<dbReference type="Antibodypedia" id="32751">
    <property type="antibodies" value="222 antibodies from 28 providers"/>
</dbReference>
<dbReference type="DNASU" id="51365"/>
<dbReference type="Ensembl" id="ENST00000273371.9">
    <molecule id="Q53H76-1"/>
    <property type="protein sequence ID" value="ENSP00000273371.4"/>
    <property type="gene ID" value="ENSG00000144837.9"/>
</dbReference>
<dbReference type="Ensembl" id="ENST00000488919.5">
    <molecule id="Q53H76-4"/>
    <property type="protein sequence ID" value="ENSP00000420625.1"/>
    <property type="gene ID" value="ENSG00000144837.9"/>
</dbReference>
<dbReference type="Ensembl" id="ENST00000495992.5">
    <molecule id="Q53H76-3"/>
    <property type="protein sequence ID" value="ENSP00000417326.1"/>
    <property type="gene ID" value="ENSG00000144837.9"/>
</dbReference>
<dbReference type="GeneID" id="51365"/>
<dbReference type="KEGG" id="hsa:51365"/>
<dbReference type="MANE-Select" id="ENST00000273371.9">
    <property type="protein sequence ID" value="ENSP00000273371.4"/>
    <property type="RefSeq nucleotide sequence ID" value="NM_015900.4"/>
    <property type="RefSeq protein sequence ID" value="NP_056984.1"/>
</dbReference>
<dbReference type="UCSC" id="uc003ecu.4">
    <molecule id="Q53H76-1"/>
    <property type="organism name" value="human"/>
</dbReference>
<dbReference type="AGR" id="HGNC:17661"/>
<dbReference type="CTD" id="51365"/>
<dbReference type="DisGeNET" id="51365"/>
<dbReference type="GeneCards" id="PLA1A"/>
<dbReference type="HGNC" id="HGNC:17661">
    <property type="gene designation" value="PLA1A"/>
</dbReference>
<dbReference type="HPA" id="ENSG00000144837">
    <property type="expression patterns" value="Tissue enhanced (choroid plexus, epididymis, parathyroid gland, seminal vesicle)"/>
</dbReference>
<dbReference type="MIM" id="607460">
    <property type="type" value="gene"/>
</dbReference>
<dbReference type="neXtProt" id="NX_Q53H76"/>
<dbReference type="OpenTargets" id="ENSG00000144837"/>
<dbReference type="PharmGKB" id="PA134955851"/>
<dbReference type="VEuPathDB" id="HostDB:ENSG00000144837"/>
<dbReference type="eggNOG" id="ENOG502QQQP">
    <property type="taxonomic scope" value="Eukaryota"/>
</dbReference>
<dbReference type="GeneTree" id="ENSGT00940000159279"/>
<dbReference type="HOGENOM" id="CLU_985272_0_0_1"/>
<dbReference type="InParanoid" id="Q53H76"/>
<dbReference type="OMA" id="AHANPQC"/>
<dbReference type="OrthoDB" id="199913at2759"/>
<dbReference type="PAN-GO" id="Q53H76">
    <property type="GO annotations" value="3 GO annotations based on evolutionary models"/>
</dbReference>
<dbReference type="PhylomeDB" id="Q53H76"/>
<dbReference type="TreeFam" id="TF324997"/>
<dbReference type="BioCyc" id="MetaCyc:ENSG00000144837-MONOMER"/>
<dbReference type="BRENDA" id="3.1.1.111">
    <property type="organism ID" value="2681"/>
</dbReference>
<dbReference type="BRENDA" id="3.1.1.32">
    <property type="organism ID" value="2681"/>
</dbReference>
<dbReference type="PathwayCommons" id="Q53H76"/>
<dbReference type="Reactome" id="R-HSA-1482801">
    <property type="pathway name" value="Acyl chain remodelling of PS"/>
</dbReference>
<dbReference type="SignaLink" id="Q53H76"/>
<dbReference type="BioGRID-ORCS" id="51365">
    <property type="hits" value="9 hits in 1159 CRISPR screens"/>
</dbReference>
<dbReference type="ChiTaRS" id="PLA1A">
    <property type="organism name" value="human"/>
</dbReference>
<dbReference type="GenomeRNAi" id="51365"/>
<dbReference type="Pharos" id="Q53H76">
    <property type="development level" value="Tbio"/>
</dbReference>
<dbReference type="PRO" id="PR:Q53H76"/>
<dbReference type="Proteomes" id="UP000005640">
    <property type="component" value="Chromosome 3"/>
</dbReference>
<dbReference type="RNAct" id="Q53H76">
    <property type="molecule type" value="protein"/>
</dbReference>
<dbReference type="Bgee" id="ENSG00000144837">
    <property type="expression patterns" value="Expressed in corpus epididymis and 134 other cell types or tissues"/>
</dbReference>
<dbReference type="ExpressionAtlas" id="Q53H76">
    <property type="expression patterns" value="baseline and differential"/>
</dbReference>
<dbReference type="GO" id="GO:0002080">
    <property type="term" value="C:acrosomal membrane"/>
    <property type="evidence" value="ECO:0007669"/>
    <property type="project" value="Ensembl"/>
</dbReference>
<dbReference type="GO" id="GO:0005576">
    <property type="term" value="C:extracellular region"/>
    <property type="evidence" value="ECO:0000304"/>
    <property type="project" value="Reactome"/>
</dbReference>
<dbReference type="GO" id="GO:0005615">
    <property type="term" value="C:extracellular space"/>
    <property type="evidence" value="ECO:0000318"/>
    <property type="project" value="GO_Central"/>
</dbReference>
<dbReference type="GO" id="GO:0008970">
    <property type="term" value="F:phospholipase A1 activity"/>
    <property type="evidence" value="ECO:0000318"/>
    <property type="project" value="GO_Central"/>
</dbReference>
<dbReference type="GO" id="GO:0016042">
    <property type="term" value="P:lipid catabolic process"/>
    <property type="evidence" value="ECO:0000318"/>
    <property type="project" value="GO_Central"/>
</dbReference>
<dbReference type="GO" id="GO:0006629">
    <property type="term" value="P:lipid metabolic process"/>
    <property type="evidence" value="ECO:0000304"/>
    <property type="project" value="ProtInc"/>
</dbReference>
<dbReference type="GO" id="GO:0036150">
    <property type="term" value="P:phosphatidylserine acyl-chain remodeling"/>
    <property type="evidence" value="ECO:0000304"/>
    <property type="project" value="Reactome"/>
</dbReference>
<dbReference type="GO" id="GO:0006658">
    <property type="term" value="P:phosphatidylserine metabolic process"/>
    <property type="evidence" value="ECO:0000304"/>
    <property type="project" value="ProtInc"/>
</dbReference>
<dbReference type="CDD" id="cd00707">
    <property type="entry name" value="Pancreat_lipase_like"/>
    <property type="match status" value="1"/>
</dbReference>
<dbReference type="FunFam" id="3.40.50.1820:FF:000081">
    <property type="entry name" value="phospholipase A1 member A isoform X1"/>
    <property type="match status" value="1"/>
</dbReference>
<dbReference type="Gene3D" id="3.40.50.1820">
    <property type="entry name" value="alpha/beta hydrolase"/>
    <property type="match status" value="1"/>
</dbReference>
<dbReference type="InterPro" id="IPR029058">
    <property type="entry name" value="AB_hydrolase_fold"/>
</dbReference>
<dbReference type="InterPro" id="IPR013818">
    <property type="entry name" value="Lipase"/>
</dbReference>
<dbReference type="InterPro" id="IPR016272">
    <property type="entry name" value="Lipase_LIPH"/>
</dbReference>
<dbReference type="InterPro" id="IPR033906">
    <property type="entry name" value="Lipase_N"/>
</dbReference>
<dbReference type="InterPro" id="IPR000734">
    <property type="entry name" value="TAG_lipase"/>
</dbReference>
<dbReference type="PANTHER" id="PTHR11610">
    <property type="entry name" value="LIPASE"/>
    <property type="match status" value="1"/>
</dbReference>
<dbReference type="PANTHER" id="PTHR11610:SF111">
    <property type="entry name" value="PHOSPHOLIPASE A1 MEMBER A"/>
    <property type="match status" value="1"/>
</dbReference>
<dbReference type="Pfam" id="PF00151">
    <property type="entry name" value="Lipase"/>
    <property type="match status" value="1"/>
</dbReference>
<dbReference type="PIRSF" id="PIRSF000865">
    <property type="entry name" value="Lipoprotein_lipase_LIPH"/>
    <property type="match status" value="1"/>
</dbReference>
<dbReference type="PRINTS" id="PR00821">
    <property type="entry name" value="TAGLIPASE"/>
</dbReference>
<dbReference type="SUPFAM" id="SSF53474">
    <property type="entry name" value="alpha/beta-Hydrolases"/>
    <property type="match status" value="1"/>
</dbReference>
<dbReference type="PROSITE" id="PS00120">
    <property type="entry name" value="LIPASE_SER"/>
    <property type="match status" value="1"/>
</dbReference>
<name>PLA1A_HUMAN</name>
<evidence type="ECO:0000250" key="1"/>
<evidence type="ECO:0000250" key="2">
    <source>
        <dbReference type="UniProtKB" id="P97535"/>
    </source>
</evidence>
<evidence type="ECO:0000255" key="3"/>
<evidence type="ECO:0000255" key="4">
    <source>
        <dbReference type="PROSITE-ProRule" id="PRU10037"/>
    </source>
</evidence>
<evidence type="ECO:0000269" key="5">
    <source>
    </source>
</evidence>
<evidence type="ECO:0000269" key="6">
    <source>
    </source>
</evidence>
<evidence type="ECO:0000269" key="7">
    <source>
    </source>
</evidence>
<evidence type="ECO:0000303" key="8">
    <source>
    </source>
</evidence>
<evidence type="ECO:0000303" key="9">
    <source>
    </source>
</evidence>
<evidence type="ECO:0000303" key="10">
    <source>
    </source>
</evidence>
<evidence type="ECO:0000305" key="11"/>
<evidence type="ECO:0000305" key="12">
    <source>
    </source>
</evidence>
<evidence type="ECO:0000312" key="13">
    <source>
        <dbReference type="HGNC" id="HGNC:17661"/>
    </source>
</evidence>
<reference key="1">
    <citation type="journal article" date="1997" name="FEBS Lett.">
        <title>nmd, a novel gene differentially expressed in human melanoma cell lines, encodes a new atypical member of the enzyme family of lipases.</title>
        <authorList>
            <person name="van Groningen J.J.M."/>
            <person name="Egmond M.R."/>
            <person name="Bloemers H.P.J."/>
            <person name="Swart G.W.M."/>
        </authorList>
    </citation>
    <scope>NUCLEOTIDE SEQUENCE [MRNA] (ISOFORM 1)</scope>
    <scope>TISSUE SPECIFICITY</scope>
    <source>
        <tissue>Melanoma</tissue>
    </source>
</reference>
<reference key="2">
    <citation type="journal article" date="1999" name="J. Biol. Chem.">
        <title>An alternative splicing form of phosphatidylserine-specific phospholipase A1 that exhibits lysophosphatidylserine-specific lysophospholipase activity in humans.</title>
        <authorList>
            <person name="Nagai Y."/>
            <person name="Aoki J."/>
            <person name="Sato T."/>
            <person name="Amano K."/>
            <person name="Matsuda Y."/>
            <person name="Arai H."/>
            <person name="Inoue K."/>
        </authorList>
    </citation>
    <scope>NUCLEOTIDE SEQUENCE [MRNA] (ISOFORMS 1 AND 2)</scope>
    <scope>FUNCTION</scope>
    <scope>CATALYTIC ACTIVITY (ISOFORMS 1 AND 2)</scope>
</reference>
<reference key="3">
    <citation type="journal article" date="2004" name="Nat. Genet.">
        <title>Complete sequencing and characterization of 21,243 full-length human cDNAs.</title>
        <authorList>
            <person name="Ota T."/>
            <person name="Suzuki Y."/>
            <person name="Nishikawa T."/>
            <person name="Otsuki T."/>
            <person name="Sugiyama T."/>
            <person name="Irie R."/>
            <person name="Wakamatsu A."/>
            <person name="Hayashi K."/>
            <person name="Sato H."/>
            <person name="Nagai K."/>
            <person name="Kimura K."/>
            <person name="Makita H."/>
            <person name="Sekine M."/>
            <person name="Obayashi M."/>
            <person name="Nishi T."/>
            <person name="Shibahara T."/>
            <person name="Tanaka T."/>
            <person name="Ishii S."/>
            <person name="Yamamoto J."/>
            <person name="Saito K."/>
            <person name="Kawai Y."/>
            <person name="Isono Y."/>
            <person name="Nakamura Y."/>
            <person name="Nagahari K."/>
            <person name="Murakami K."/>
            <person name="Yasuda T."/>
            <person name="Iwayanagi T."/>
            <person name="Wagatsuma M."/>
            <person name="Shiratori A."/>
            <person name="Sudo H."/>
            <person name="Hosoiri T."/>
            <person name="Kaku Y."/>
            <person name="Kodaira H."/>
            <person name="Kondo H."/>
            <person name="Sugawara M."/>
            <person name="Takahashi M."/>
            <person name="Kanda K."/>
            <person name="Yokoi T."/>
            <person name="Furuya T."/>
            <person name="Kikkawa E."/>
            <person name="Omura Y."/>
            <person name="Abe K."/>
            <person name="Kamihara K."/>
            <person name="Katsuta N."/>
            <person name="Sato K."/>
            <person name="Tanikawa M."/>
            <person name="Yamazaki M."/>
            <person name="Ninomiya K."/>
            <person name="Ishibashi T."/>
            <person name="Yamashita H."/>
            <person name="Murakawa K."/>
            <person name="Fujimori K."/>
            <person name="Tanai H."/>
            <person name="Kimata M."/>
            <person name="Watanabe M."/>
            <person name="Hiraoka S."/>
            <person name="Chiba Y."/>
            <person name="Ishida S."/>
            <person name="Ono Y."/>
            <person name="Takiguchi S."/>
            <person name="Watanabe S."/>
            <person name="Yosida M."/>
            <person name="Hotuta T."/>
            <person name="Kusano J."/>
            <person name="Kanehori K."/>
            <person name="Takahashi-Fujii A."/>
            <person name="Hara H."/>
            <person name="Tanase T.-O."/>
            <person name="Nomura Y."/>
            <person name="Togiya S."/>
            <person name="Komai F."/>
            <person name="Hara R."/>
            <person name="Takeuchi K."/>
            <person name="Arita M."/>
            <person name="Imose N."/>
            <person name="Musashino K."/>
            <person name="Yuuki H."/>
            <person name="Oshima A."/>
            <person name="Sasaki N."/>
            <person name="Aotsuka S."/>
            <person name="Yoshikawa Y."/>
            <person name="Matsunawa H."/>
            <person name="Ichihara T."/>
            <person name="Shiohata N."/>
            <person name="Sano S."/>
            <person name="Moriya S."/>
            <person name="Momiyama H."/>
            <person name="Satoh N."/>
            <person name="Takami S."/>
            <person name="Terashima Y."/>
            <person name="Suzuki O."/>
            <person name="Nakagawa S."/>
            <person name="Senoh A."/>
            <person name="Mizoguchi H."/>
            <person name="Goto Y."/>
            <person name="Shimizu F."/>
            <person name="Wakebe H."/>
            <person name="Hishigaki H."/>
            <person name="Watanabe T."/>
            <person name="Sugiyama A."/>
            <person name="Takemoto M."/>
            <person name="Kawakami B."/>
            <person name="Yamazaki M."/>
            <person name="Watanabe K."/>
            <person name="Kumagai A."/>
            <person name="Itakura S."/>
            <person name="Fukuzumi Y."/>
            <person name="Fujimori Y."/>
            <person name="Komiyama M."/>
            <person name="Tashiro H."/>
            <person name="Tanigami A."/>
            <person name="Fujiwara T."/>
            <person name="Ono T."/>
            <person name="Yamada K."/>
            <person name="Fujii Y."/>
            <person name="Ozaki K."/>
            <person name="Hirao M."/>
            <person name="Ohmori Y."/>
            <person name="Kawabata A."/>
            <person name="Hikiji T."/>
            <person name="Kobatake N."/>
            <person name="Inagaki H."/>
            <person name="Ikema Y."/>
            <person name="Okamoto S."/>
            <person name="Okitani R."/>
            <person name="Kawakami T."/>
            <person name="Noguchi S."/>
            <person name="Itoh T."/>
            <person name="Shigeta K."/>
            <person name="Senba T."/>
            <person name="Matsumura K."/>
            <person name="Nakajima Y."/>
            <person name="Mizuno T."/>
            <person name="Morinaga M."/>
            <person name="Sasaki M."/>
            <person name="Togashi T."/>
            <person name="Oyama M."/>
            <person name="Hata H."/>
            <person name="Watanabe M."/>
            <person name="Komatsu T."/>
            <person name="Mizushima-Sugano J."/>
            <person name="Satoh T."/>
            <person name="Shirai Y."/>
            <person name="Takahashi Y."/>
            <person name="Nakagawa K."/>
            <person name="Okumura K."/>
            <person name="Nagase T."/>
            <person name="Nomura N."/>
            <person name="Kikuchi H."/>
            <person name="Masuho Y."/>
            <person name="Yamashita R."/>
            <person name="Nakai K."/>
            <person name="Yada T."/>
            <person name="Nakamura Y."/>
            <person name="Ohara O."/>
            <person name="Isogai T."/>
            <person name="Sugano S."/>
        </authorList>
    </citation>
    <scope>NUCLEOTIDE SEQUENCE [LARGE SCALE MRNA] (ISOFORMS 1 AND 4)</scope>
    <source>
        <tissue>Testis</tissue>
    </source>
</reference>
<reference key="4">
    <citation type="submission" date="2005-04" db="EMBL/GenBank/DDBJ databases">
        <authorList>
            <person name="Suzuki Y."/>
            <person name="Sugano S."/>
            <person name="Totoki Y."/>
            <person name="Toyoda A."/>
            <person name="Takeda T."/>
            <person name="Sakaki Y."/>
            <person name="Tanaka A."/>
            <person name="Yokoyama S."/>
        </authorList>
    </citation>
    <scope>NUCLEOTIDE SEQUENCE [LARGE SCALE MRNA] (ISOFORM 1)</scope>
    <source>
        <tissue>Brain</tissue>
    </source>
</reference>
<reference key="5">
    <citation type="journal article" date="2006" name="Nature">
        <title>The DNA sequence, annotation and analysis of human chromosome 3.</title>
        <authorList>
            <person name="Muzny D.M."/>
            <person name="Scherer S.E."/>
            <person name="Kaul R."/>
            <person name="Wang J."/>
            <person name="Yu J."/>
            <person name="Sudbrak R."/>
            <person name="Buhay C.J."/>
            <person name="Chen R."/>
            <person name="Cree A."/>
            <person name="Ding Y."/>
            <person name="Dugan-Rocha S."/>
            <person name="Gill R."/>
            <person name="Gunaratne P."/>
            <person name="Harris R.A."/>
            <person name="Hawes A.C."/>
            <person name="Hernandez J."/>
            <person name="Hodgson A.V."/>
            <person name="Hume J."/>
            <person name="Jackson A."/>
            <person name="Khan Z.M."/>
            <person name="Kovar-Smith C."/>
            <person name="Lewis L.R."/>
            <person name="Lozado R.J."/>
            <person name="Metzker M.L."/>
            <person name="Milosavljevic A."/>
            <person name="Miner G.R."/>
            <person name="Morgan M.B."/>
            <person name="Nazareth L.V."/>
            <person name="Scott G."/>
            <person name="Sodergren E."/>
            <person name="Song X.-Z."/>
            <person name="Steffen D."/>
            <person name="Wei S."/>
            <person name="Wheeler D.A."/>
            <person name="Wright M.W."/>
            <person name="Worley K.C."/>
            <person name="Yuan Y."/>
            <person name="Zhang Z."/>
            <person name="Adams C.Q."/>
            <person name="Ansari-Lari M.A."/>
            <person name="Ayele M."/>
            <person name="Brown M.J."/>
            <person name="Chen G."/>
            <person name="Chen Z."/>
            <person name="Clendenning J."/>
            <person name="Clerc-Blankenburg K.P."/>
            <person name="Chen R."/>
            <person name="Chen Z."/>
            <person name="Davis C."/>
            <person name="Delgado O."/>
            <person name="Dinh H.H."/>
            <person name="Dong W."/>
            <person name="Draper H."/>
            <person name="Ernst S."/>
            <person name="Fu G."/>
            <person name="Gonzalez-Garay M.L."/>
            <person name="Garcia D.K."/>
            <person name="Gillett W."/>
            <person name="Gu J."/>
            <person name="Hao B."/>
            <person name="Haugen E."/>
            <person name="Havlak P."/>
            <person name="He X."/>
            <person name="Hennig S."/>
            <person name="Hu S."/>
            <person name="Huang W."/>
            <person name="Jackson L.R."/>
            <person name="Jacob L.S."/>
            <person name="Kelly S.H."/>
            <person name="Kube M."/>
            <person name="Levy R."/>
            <person name="Li Z."/>
            <person name="Liu B."/>
            <person name="Liu J."/>
            <person name="Liu W."/>
            <person name="Lu J."/>
            <person name="Maheshwari M."/>
            <person name="Nguyen B.-V."/>
            <person name="Okwuonu G.O."/>
            <person name="Palmeiri A."/>
            <person name="Pasternak S."/>
            <person name="Perez L.M."/>
            <person name="Phelps K.A."/>
            <person name="Plopper F.J."/>
            <person name="Qiang B."/>
            <person name="Raymond C."/>
            <person name="Rodriguez R."/>
            <person name="Saenphimmachak C."/>
            <person name="Santibanez J."/>
            <person name="Shen H."/>
            <person name="Shen Y."/>
            <person name="Subramanian S."/>
            <person name="Tabor P.E."/>
            <person name="Verduzco D."/>
            <person name="Waldron L."/>
            <person name="Wang J."/>
            <person name="Wang J."/>
            <person name="Wang Q."/>
            <person name="Williams G.A."/>
            <person name="Wong G.K.-S."/>
            <person name="Yao Z."/>
            <person name="Zhang J."/>
            <person name="Zhang X."/>
            <person name="Zhao G."/>
            <person name="Zhou J."/>
            <person name="Zhou Y."/>
            <person name="Nelson D."/>
            <person name="Lehrach H."/>
            <person name="Reinhardt R."/>
            <person name="Naylor S.L."/>
            <person name="Yang H."/>
            <person name="Olson M."/>
            <person name="Weinstock G."/>
            <person name="Gibbs R.A."/>
        </authorList>
    </citation>
    <scope>NUCLEOTIDE SEQUENCE [LARGE SCALE GENOMIC DNA]</scope>
</reference>
<reference key="6">
    <citation type="submission" date="2005-09" db="EMBL/GenBank/DDBJ databases">
        <authorList>
            <person name="Mural R.J."/>
            <person name="Istrail S."/>
            <person name="Sutton G.G."/>
            <person name="Florea L."/>
            <person name="Halpern A.L."/>
            <person name="Mobarry C.M."/>
            <person name="Lippert R."/>
            <person name="Walenz B."/>
            <person name="Shatkay H."/>
            <person name="Dew I."/>
            <person name="Miller J.R."/>
            <person name="Flanigan M.J."/>
            <person name="Edwards N.J."/>
            <person name="Bolanos R."/>
            <person name="Fasulo D."/>
            <person name="Halldorsson B.V."/>
            <person name="Hannenhalli S."/>
            <person name="Turner R."/>
            <person name="Yooseph S."/>
            <person name="Lu F."/>
            <person name="Nusskern D.R."/>
            <person name="Shue B.C."/>
            <person name="Zheng X.H."/>
            <person name="Zhong F."/>
            <person name="Delcher A.L."/>
            <person name="Huson D.H."/>
            <person name="Kravitz S.A."/>
            <person name="Mouchard L."/>
            <person name="Reinert K."/>
            <person name="Remington K.A."/>
            <person name="Clark A.G."/>
            <person name="Waterman M.S."/>
            <person name="Eichler E.E."/>
            <person name="Adams M.D."/>
            <person name="Hunkapiller M.W."/>
            <person name="Myers E.W."/>
            <person name="Venter J.C."/>
        </authorList>
    </citation>
    <scope>NUCLEOTIDE SEQUENCE [LARGE SCALE GENOMIC DNA]</scope>
</reference>
<reference key="7">
    <citation type="journal article" date="2004" name="Genome Res.">
        <title>The status, quality, and expansion of the NIH full-length cDNA project: the Mammalian Gene Collection (MGC).</title>
        <authorList>
            <consortium name="The MGC Project Team"/>
        </authorList>
    </citation>
    <scope>NUCLEOTIDE SEQUENCE [LARGE SCALE MRNA] (ISOFORM 3)</scope>
    <source>
        <tissue>Skin</tissue>
    </source>
</reference>
<reference key="8">
    <citation type="journal article" date="2002" name="J. Hum. Genet.">
        <title>Polymorphisms in the gene encoding phosphatidylserine-specific phospholipase A1 (PSPLA1).</title>
        <authorList>
            <person name="Wang J."/>
            <person name="Wen X.-Y."/>
            <person name="Stewart A.K."/>
            <person name="Hegele R.A."/>
        </authorList>
    </citation>
    <scope>VARIANT HIS-110</scope>
</reference>
<protein>
    <recommendedName>
        <fullName evidence="11">Phospholipase A1 member A</fullName>
        <ecNumber evidence="5">3.1.1.111</ecNumber>
    </recommendedName>
    <alternativeName>
        <fullName>Phosphatidylserine-specific phospholipase A1</fullName>
        <shortName>PS-PLA1</shortName>
    </alternativeName>
</protein>
<accession>Q53H76</accession>
<accession>B2R8V2</accession>
<accession>B4DXA2</accession>
<accession>O95991</accession>
<accession>Q86WX6</accession>
<accession>Q9UPD2</accession>
<sequence length="456" mass="49715">MPPGPWESCFWVGGLILWLSVGSSGDAPPTPQPKCADFQSANLFEGTDLKVQFLLFVPSNPSCGQLVEGSSDLQNSGFNATLGTKLIIHGFRVLGTKPSWIDTFIRTLLRATNANVIAVDWIYGSTGVYFSAVKNVIKLSLEISLFLNKLLVLGVSESSIHIIGVSLGAHVGGMVGQLFGGQLGQITGLDPAGPEYTRASVEERLDAGDALFVEAIHTDTDNLGIRIPVGHVDYFVNGGQDQPGCPTFFYAGYSYLICDHMRAVHLYISALENSCPLMAFPCASYKAFLAGRCLDCFNPFLLSCPRIGLVEQGGVKIEPLPKEVKVYLLTTSSAPYCMHHSLVEFHLKELRNKDTNIEVTFLSSNITSSSKITIPKQQRYGKGIIAHATPQCQINQVKFKFQSSNRVWKKDRTTIIGKFCTALLPVNDREKMVCLPEPVNLQASVTVSCDLKIACV</sequence>
<feature type="signal peptide" evidence="3">
    <location>
        <begin position="1"/>
        <end position="25"/>
    </location>
</feature>
<feature type="chain" id="PRO_0000273330" description="Phospholipase A1 member A">
    <location>
        <begin position="26"/>
        <end position="456"/>
    </location>
</feature>
<feature type="region of interest" description="Involved in the recognition of diacyl-phospholipids">
    <location>
        <begin position="374"/>
        <end position="456"/>
    </location>
</feature>
<feature type="active site" description="Nucleophile" evidence="1">
    <location>
        <position position="166"/>
    </location>
</feature>
<feature type="active site" description="Charge relay system" evidence="4">
    <location>
        <position position="190"/>
    </location>
</feature>
<feature type="active site" description="Charge relay system" evidence="4">
    <location>
        <position position="260"/>
    </location>
</feature>
<feature type="glycosylation site" description="N-linked (GlcNAc...) asparagine" evidence="3">
    <location>
        <position position="79"/>
    </location>
</feature>
<feature type="glycosylation site" description="N-linked (GlcNAc...) asparagine" evidence="3">
    <location>
        <position position="365"/>
    </location>
</feature>
<feature type="disulfide bond" evidence="1">
    <location>
        <begin position="245"/>
        <end position="258"/>
    </location>
</feature>
<feature type="disulfide bond" evidence="1">
    <location>
        <begin position="282"/>
        <end position="293"/>
    </location>
</feature>
<feature type="disulfide bond" evidence="1">
    <location>
        <begin position="296"/>
        <end position="304"/>
    </location>
</feature>
<feature type="splice variant" id="VSP_044944" description="In isoform 4." evidence="9">
    <location>
        <begin position="1"/>
        <end position="173"/>
    </location>
</feature>
<feature type="splice variant" id="VSP_022507" description="In isoform 3." evidence="10">
    <location>
        <begin position="136"/>
        <end position="151"/>
    </location>
</feature>
<feature type="splice variant" id="VSP_022508" description="In isoform 2." evidence="8">
    <original>IPK</original>
    <variation>MYT</variation>
    <location>
        <begin position="374"/>
        <end position="376"/>
    </location>
</feature>
<feature type="splice variant" id="VSP_022509" description="In isoform 2." evidence="8">
    <location>
        <begin position="377"/>
        <end position="456"/>
    </location>
</feature>
<feature type="sequence variant" id="VAR_030126" description="In dbSNP:rs1128293.">
    <original>S</original>
    <variation>I</variation>
    <location>
        <position position="23"/>
    </location>
</feature>
<feature type="sequence variant" id="VAR_030127" description="In dbSNP:rs61733987." evidence="6">
    <original>R</original>
    <variation>H</variation>
    <location>
        <position position="110"/>
    </location>
</feature>
<feature type="sequence variant" id="VAR_030128" description="In dbSNP:rs2692622.">
    <original>S</original>
    <variation>N</variation>
    <location>
        <position position="284"/>
    </location>
</feature>
<feature type="sequence conflict" description="In Ref. 4; BAD96425." evidence="11" ref="4">
    <original>V</original>
    <variation>T</variation>
    <location>
        <position position="213"/>
    </location>
</feature>
<keyword id="KW-0025">Alternative splicing</keyword>
<keyword id="KW-1015">Disulfide bond</keyword>
<keyword id="KW-0325">Glycoprotein</keyword>
<keyword id="KW-0378">Hydrolase</keyword>
<keyword id="KW-0442">Lipid degradation</keyword>
<keyword id="KW-0443">Lipid metabolism</keyword>
<keyword id="KW-1267">Proteomics identification</keyword>
<keyword id="KW-1185">Reference proteome</keyword>
<keyword id="KW-0964">Secreted</keyword>
<keyword id="KW-0732">Signal</keyword>
<comment type="function">
    <text evidence="2 5">Hydrolyzes the ester bond of the acyl group attached at the sn-1 position of phosphatidylserines (phospholipase A1 activity) and 1-acyl-2-lysophosphatidylserines (lysophospholipase activity) in the pathway of phosphatidylserines acyl chain remodeling (PubMed:10196188). Cleaves phosphatidylserines exposed on the outer leaflet of the plasma membrane of apoptotic cells producing 2-acyl-1-lysophosphatidylserines, which in turn enhance mast cell activation and histamine production (By similarity). Has no activity toward other glycerophospholipids including phosphatidylcholines, phosphatidylethanolamines, phosphatidic acids or phosphatidylinositols, or glycerolipids such as triolein (By similarity).</text>
</comment>
<comment type="function">
    <molecule>Isoform 2</molecule>
    <text evidence="5">Hydrolyzes lyso-PS but not PS.</text>
</comment>
<comment type="catalytic activity">
    <reaction evidence="5">
        <text>a 1,2-diacyl-sn-glycero-3-phospho-L-serine + H2O = a 2-acyl-sn-glycero-3-phospho-L-serine + a fatty acid + H(+)</text>
        <dbReference type="Rhea" id="RHEA:42212"/>
        <dbReference type="ChEBI" id="CHEBI:15377"/>
        <dbReference type="ChEBI" id="CHEBI:15378"/>
        <dbReference type="ChEBI" id="CHEBI:28868"/>
        <dbReference type="ChEBI" id="CHEBI:57262"/>
        <dbReference type="ChEBI" id="CHEBI:65214"/>
        <dbReference type="EC" id="3.1.1.111"/>
    </reaction>
    <physiologicalReaction direction="left-to-right" evidence="12">
        <dbReference type="Rhea" id="RHEA:42213"/>
    </physiologicalReaction>
</comment>
<comment type="catalytic activity">
    <molecule>Isoform 1</molecule>
    <reaction evidence="5">
        <text>1,2-di-(9Z)-octadecenoyl-sn-glycero-3-phospho-L-serine + H2O = 2-(9Z-octadecenoyl)-sn-glycero-3-phospho-L-serine + (9Z)-octadecenoate + H(+)</text>
        <dbReference type="Rhea" id="RHEA:40491"/>
        <dbReference type="ChEBI" id="CHEBI:15377"/>
        <dbReference type="ChEBI" id="CHEBI:15378"/>
        <dbReference type="ChEBI" id="CHEBI:30823"/>
        <dbReference type="ChEBI" id="CHEBI:74905"/>
        <dbReference type="ChEBI" id="CHEBI:77342"/>
    </reaction>
    <physiologicalReaction direction="left-to-right" evidence="12">
        <dbReference type="Rhea" id="RHEA:40492"/>
    </physiologicalReaction>
</comment>
<comment type="catalytic activity">
    <reaction evidence="2">
        <text>1-hexadecanoyl-2-(5Z,8Z,11Z,14Z-eicosatetraenoyl)-sn-glycero-3-phospho-L-serine + H2O = 2-(5Z,8Z,11Z,14Z)-eicosatetraenoyl-sn-glycero-3-phospho-L-serine + hexadecanoate + H(+)</text>
        <dbReference type="Rhea" id="RHEA:41187"/>
        <dbReference type="ChEBI" id="CHEBI:7896"/>
        <dbReference type="ChEBI" id="CHEBI:15377"/>
        <dbReference type="ChEBI" id="CHEBI:15378"/>
        <dbReference type="ChEBI" id="CHEBI:75032"/>
        <dbReference type="ChEBI" id="CHEBI:77830"/>
    </reaction>
    <physiologicalReaction direction="left-to-right" evidence="2">
        <dbReference type="Rhea" id="RHEA:41188"/>
    </physiologicalReaction>
</comment>
<comment type="catalytic activity">
    <reaction evidence="5">
        <text>a 1-acyl-sn-glycero-3-phospho-L-serine + H2O = sn-glycero-3-phospho-L-serine + a fatty acid + H(+)</text>
        <dbReference type="Rhea" id="RHEA:32979"/>
        <dbReference type="ChEBI" id="CHEBI:15377"/>
        <dbReference type="ChEBI" id="CHEBI:15378"/>
        <dbReference type="ChEBI" id="CHEBI:28868"/>
        <dbReference type="ChEBI" id="CHEBI:64379"/>
        <dbReference type="ChEBI" id="CHEBI:64765"/>
        <dbReference type="EC" id="3.1.1.111"/>
    </reaction>
    <physiologicalReaction direction="left-to-right" evidence="12">
        <dbReference type="Rhea" id="RHEA:32980"/>
    </physiologicalReaction>
</comment>
<comment type="catalytic activity">
    <molecule>Isoform 1</molecule>
    <reaction evidence="5">
        <text>1-(9Z-octadecenoyl)-sn-glycero-3-phospho-L-serine + H2O = sn-glycero-3-phospho-L-serine + (9Z)-octadecenoate + H(+)</text>
        <dbReference type="Rhea" id="RHEA:40499"/>
        <dbReference type="ChEBI" id="CHEBI:15377"/>
        <dbReference type="ChEBI" id="CHEBI:15378"/>
        <dbReference type="ChEBI" id="CHEBI:30823"/>
        <dbReference type="ChEBI" id="CHEBI:64765"/>
        <dbReference type="ChEBI" id="CHEBI:74617"/>
    </reaction>
    <physiologicalReaction direction="left-to-right" evidence="12">
        <dbReference type="Rhea" id="RHEA:40500"/>
    </physiologicalReaction>
</comment>
<comment type="catalytic activity">
    <molecule>Isoform 2</molecule>
    <reaction evidence="5">
        <text>1-(9Z-octadecenoyl)-sn-glycero-3-phospho-L-serine + H2O = sn-glycero-3-phospho-L-serine + (9Z)-octadecenoate + H(+)</text>
        <dbReference type="Rhea" id="RHEA:40499"/>
        <dbReference type="ChEBI" id="CHEBI:15377"/>
        <dbReference type="ChEBI" id="CHEBI:15378"/>
        <dbReference type="ChEBI" id="CHEBI:30823"/>
        <dbReference type="ChEBI" id="CHEBI:64765"/>
        <dbReference type="ChEBI" id="CHEBI:74617"/>
    </reaction>
    <physiologicalReaction direction="left-to-right" evidence="12">
        <dbReference type="Rhea" id="RHEA:40500"/>
    </physiologicalReaction>
</comment>
<comment type="subcellular location">
    <subcellularLocation>
        <location evidence="2">Secreted</location>
    </subcellularLocation>
</comment>
<comment type="alternative products">
    <event type="alternative splicing"/>
    <isoform>
        <id>Q53H76-1</id>
        <name>1</name>
        <sequence type="displayed"/>
    </isoform>
    <isoform>
        <id>Q53H76-2</id>
        <name>2</name>
        <name>DeltaC</name>
        <sequence type="described" ref="VSP_022508 VSP_022509"/>
    </isoform>
    <isoform>
        <id>Q53H76-3</id>
        <name>3</name>
        <sequence type="described" ref="VSP_022507"/>
    </isoform>
    <isoform>
        <id>Q53H76-4</id>
        <name>4</name>
        <sequence type="described" ref="VSP_044944"/>
    </isoform>
</comment>
<comment type="tissue specificity">
    <text evidence="7">Widely expressed. Expressed in placenta, prostate and liver. Weakly or not expressed in skin, leukocytes, platelets, colon, spleen, lung, muscle and kidney.</text>
</comment>
<comment type="similarity">
    <text evidence="11">Belongs to the AB hydrolase superfamily. Lipase family.</text>
</comment>
<gene>
    <name evidence="13" type="primary">PLA1A</name>
    <name type="synonym">NMD</name>
    <name type="synonym">PSPLA1</name>
</gene>
<proteinExistence type="evidence at protein level"/>